<keyword id="KW-0066">ATP synthesis</keyword>
<keyword id="KW-0997">Cell inner membrane</keyword>
<keyword id="KW-1003">Cell membrane</keyword>
<keyword id="KW-0139">CF(1)</keyword>
<keyword id="KW-0375">Hydrogen ion transport</keyword>
<keyword id="KW-0406">Ion transport</keyword>
<keyword id="KW-0472">Membrane</keyword>
<keyword id="KW-0813">Transport</keyword>
<sequence>MASGREIKSKIKSVQNTRKVTRALEMVSASKIRKAQEQMKISRPYAQAMKQMTGHLAQANTDYLHPFLIAHKQVKRIGYIVISSDRGLAGGLNNNLFRKMLGEMRQWQDKGAEVDIVTIGQKASVFFRRIKVNILGSVTHLGDTPRLEQLIGVIKVMLDAYTEEKLDRVYLVYNRFINTMVQKASFDQLLPLLAAKDKVAHHDWDYLYEPDAATVLEHVMRRYIESLVYQAMLENIASEHAARMVAMKAASDNANKLIGTLQLVYNKARQAAITQEISEIVGGAAAV</sequence>
<comment type="function">
    <text evidence="1">Produces ATP from ADP in the presence of a proton gradient across the membrane. The gamma chain is believed to be important in regulating ATPase activity and the flow of protons through the CF(0) complex.</text>
</comment>
<comment type="subunit">
    <text evidence="1">F-type ATPases have 2 components, CF(1) - the catalytic core - and CF(0) - the membrane proton channel. CF(1) has five subunits: alpha(3), beta(3), gamma(1), delta(1), epsilon(1). CF(0) has three main subunits: a, b and c.</text>
</comment>
<comment type="subcellular location">
    <subcellularLocation>
        <location evidence="1">Cell inner membrane</location>
        <topology evidence="1">Peripheral membrane protein</topology>
    </subcellularLocation>
</comment>
<comment type="similarity">
    <text evidence="1">Belongs to the ATPase gamma chain family.</text>
</comment>
<accession>Q9PE84</accession>
<proteinExistence type="inferred from homology"/>
<feature type="chain" id="PRO_0000073424" description="ATP synthase gamma chain">
    <location>
        <begin position="1"/>
        <end position="287"/>
    </location>
</feature>
<gene>
    <name evidence="1" type="primary">atpG</name>
    <name type="ordered locus">XF_1144</name>
</gene>
<reference key="1">
    <citation type="journal article" date="2000" name="Nature">
        <title>The genome sequence of the plant pathogen Xylella fastidiosa.</title>
        <authorList>
            <person name="Simpson A.J.G."/>
            <person name="Reinach F.C."/>
            <person name="Arruda P."/>
            <person name="Abreu F.A."/>
            <person name="Acencio M."/>
            <person name="Alvarenga R."/>
            <person name="Alves L.M.C."/>
            <person name="Araya J.E."/>
            <person name="Baia G.S."/>
            <person name="Baptista C.S."/>
            <person name="Barros M.H."/>
            <person name="Bonaccorsi E.D."/>
            <person name="Bordin S."/>
            <person name="Bove J.M."/>
            <person name="Briones M.R.S."/>
            <person name="Bueno M.R.P."/>
            <person name="Camargo A.A."/>
            <person name="Camargo L.E.A."/>
            <person name="Carraro D.M."/>
            <person name="Carrer H."/>
            <person name="Colauto N.B."/>
            <person name="Colombo C."/>
            <person name="Costa F.F."/>
            <person name="Costa M.C.R."/>
            <person name="Costa-Neto C.M."/>
            <person name="Coutinho L.L."/>
            <person name="Cristofani M."/>
            <person name="Dias-Neto E."/>
            <person name="Docena C."/>
            <person name="El-Dorry H."/>
            <person name="Facincani A.P."/>
            <person name="Ferreira A.J.S."/>
            <person name="Ferreira V.C.A."/>
            <person name="Ferro J.A."/>
            <person name="Fraga J.S."/>
            <person name="Franca S.C."/>
            <person name="Franco M.C."/>
            <person name="Frohme M."/>
            <person name="Furlan L.R."/>
            <person name="Garnier M."/>
            <person name="Goldman G.H."/>
            <person name="Goldman M.H.S."/>
            <person name="Gomes S.L."/>
            <person name="Gruber A."/>
            <person name="Ho P.L."/>
            <person name="Hoheisel J.D."/>
            <person name="Junqueira M.L."/>
            <person name="Kemper E.L."/>
            <person name="Kitajima J.P."/>
            <person name="Krieger J.E."/>
            <person name="Kuramae E.E."/>
            <person name="Laigret F."/>
            <person name="Lambais M.R."/>
            <person name="Leite L.C.C."/>
            <person name="Lemos E.G.M."/>
            <person name="Lemos M.V.F."/>
            <person name="Lopes S.A."/>
            <person name="Lopes C.R."/>
            <person name="Machado J.A."/>
            <person name="Machado M.A."/>
            <person name="Madeira A.M.B.N."/>
            <person name="Madeira H.M.F."/>
            <person name="Marino C.L."/>
            <person name="Marques M.V."/>
            <person name="Martins E.A.L."/>
            <person name="Martins E.M.F."/>
            <person name="Matsukuma A.Y."/>
            <person name="Menck C.F.M."/>
            <person name="Miracca E.C."/>
            <person name="Miyaki C.Y."/>
            <person name="Monteiro-Vitorello C.B."/>
            <person name="Moon D.H."/>
            <person name="Nagai M.A."/>
            <person name="Nascimento A.L.T.O."/>
            <person name="Netto L.E.S."/>
            <person name="Nhani A. Jr."/>
            <person name="Nobrega F.G."/>
            <person name="Nunes L.R."/>
            <person name="Oliveira M.A."/>
            <person name="de Oliveira M.C."/>
            <person name="de Oliveira R.C."/>
            <person name="Palmieri D.A."/>
            <person name="Paris A."/>
            <person name="Peixoto B.R."/>
            <person name="Pereira G.A.G."/>
            <person name="Pereira H.A. Jr."/>
            <person name="Pesquero J.B."/>
            <person name="Quaggio R.B."/>
            <person name="Roberto P.G."/>
            <person name="Rodrigues V."/>
            <person name="de Rosa A.J.M."/>
            <person name="de Rosa V.E. Jr."/>
            <person name="de Sa R.G."/>
            <person name="Santelli R.V."/>
            <person name="Sawasaki H.E."/>
            <person name="da Silva A.C.R."/>
            <person name="da Silva A.M."/>
            <person name="da Silva F.R."/>
            <person name="Silva W.A. Jr."/>
            <person name="da Silveira J.F."/>
            <person name="Silvestri M.L.Z."/>
            <person name="Siqueira W.J."/>
            <person name="de Souza A.A."/>
            <person name="de Souza A.P."/>
            <person name="Terenzi M.F."/>
            <person name="Truffi D."/>
            <person name="Tsai S.M."/>
            <person name="Tsuhako M.H."/>
            <person name="Vallada H."/>
            <person name="Van Sluys M.A."/>
            <person name="Verjovski-Almeida S."/>
            <person name="Vettore A.L."/>
            <person name="Zago M.A."/>
            <person name="Zatz M."/>
            <person name="Meidanis J."/>
            <person name="Setubal J.C."/>
        </authorList>
    </citation>
    <scope>NUCLEOTIDE SEQUENCE [LARGE SCALE GENOMIC DNA]</scope>
    <source>
        <strain>9a5c</strain>
    </source>
</reference>
<protein>
    <recommendedName>
        <fullName evidence="1">ATP synthase gamma chain</fullName>
    </recommendedName>
    <alternativeName>
        <fullName evidence="1">ATP synthase F1 sector gamma subunit</fullName>
    </alternativeName>
    <alternativeName>
        <fullName evidence="1">F-ATPase gamma subunit</fullName>
    </alternativeName>
</protein>
<evidence type="ECO:0000255" key="1">
    <source>
        <dbReference type="HAMAP-Rule" id="MF_00815"/>
    </source>
</evidence>
<dbReference type="EMBL" id="AE003849">
    <property type="protein sequence ID" value="AAF83954.1"/>
    <property type="molecule type" value="Genomic_DNA"/>
</dbReference>
<dbReference type="PIR" id="H82715">
    <property type="entry name" value="H82715"/>
</dbReference>
<dbReference type="RefSeq" id="WP_010893661.1">
    <property type="nucleotide sequence ID" value="NC_002488.3"/>
</dbReference>
<dbReference type="SMR" id="Q9PE84"/>
<dbReference type="STRING" id="160492.XF_1144"/>
<dbReference type="KEGG" id="xfa:XF_1144"/>
<dbReference type="eggNOG" id="COG0224">
    <property type="taxonomic scope" value="Bacteria"/>
</dbReference>
<dbReference type="HOGENOM" id="CLU_050669_0_1_6"/>
<dbReference type="Proteomes" id="UP000000812">
    <property type="component" value="Chromosome"/>
</dbReference>
<dbReference type="GO" id="GO:0005886">
    <property type="term" value="C:plasma membrane"/>
    <property type="evidence" value="ECO:0007669"/>
    <property type="project" value="UniProtKB-SubCell"/>
</dbReference>
<dbReference type="GO" id="GO:0045259">
    <property type="term" value="C:proton-transporting ATP synthase complex"/>
    <property type="evidence" value="ECO:0007669"/>
    <property type="project" value="UniProtKB-KW"/>
</dbReference>
<dbReference type="GO" id="GO:0005524">
    <property type="term" value="F:ATP binding"/>
    <property type="evidence" value="ECO:0007669"/>
    <property type="project" value="UniProtKB-UniRule"/>
</dbReference>
<dbReference type="GO" id="GO:0046933">
    <property type="term" value="F:proton-transporting ATP synthase activity, rotational mechanism"/>
    <property type="evidence" value="ECO:0007669"/>
    <property type="project" value="UniProtKB-UniRule"/>
</dbReference>
<dbReference type="GO" id="GO:0042777">
    <property type="term" value="P:proton motive force-driven plasma membrane ATP synthesis"/>
    <property type="evidence" value="ECO:0007669"/>
    <property type="project" value="UniProtKB-UniRule"/>
</dbReference>
<dbReference type="CDD" id="cd12151">
    <property type="entry name" value="F1-ATPase_gamma"/>
    <property type="match status" value="1"/>
</dbReference>
<dbReference type="FunFam" id="1.10.287.80:FF:000005">
    <property type="entry name" value="ATP synthase gamma chain"/>
    <property type="match status" value="1"/>
</dbReference>
<dbReference type="Gene3D" id="3.40.1380.10">
    <property type="match status" value="1"/>
</dbReference>
<dbReference type="Gene3D" id="1.10.287.80">
    <property type="entry name" value="ATP synthase, gamma subunit, helix hairpin domain"/>
    <property type="match status" value="1"/>
</dbReference>
<dbReference type="HAMAP" id="MF_00815">
    <property type="entry name" value="ATP_synth_gamma_bact"/>
    <property type="match status" value="1"/>
</dbReference>
<dbReference type="InterPro" id="IPR035968">
    <property type="entry name" value="ATP_synth_F1_ATPase_gsu"/>
</dbReference>
<dbReference type="InterPro" id="IPR000131">
    <property type="entry name" value="ATP_synth_F1_gsu"/>
</dbReference>
<dbReference type="InterPro" id="IPR023632">
    <property type="entry name" value="ATP_synth_F1_gsu_CS"/>
</dbReference>
<dbReference type="NCBIfam" id="TIGR01146">
    <property type="entry name" value="ATPsyn_F1gamma"/>
    <property type="match status" value="1"/>
</dbReference>
<dbReference type="NCBIfam" id="NF004144">
    <property type="entry name" value="PRK05621.1-1"/>
    <property type="match status" value="1"/>
</dbReference>
<dbReference type="PANTHER" id="PTHR11693">
    <property type="entry name" value="ATP SYNTHASE GAMMA CHAIN"/>
    <property type="match status" value="1"/>
</dbReference>
<dbReference type="PANTHER" id="PTHR11693:SF22">
    <property type="entry name" value="ATP SYNTHASE SUBUNIT GAMMA, MITOCHONDRIAL"/>
    <property type="match status" value="1"/>
</dbReference>
<dbReference type="Pfam" id="PF00231">
    <property type="entry name" value="ATP-synt"/>
    <property type="match status" value="1"/>
</dbReference>
<dbReference type="PRINTS" id="PR00126">
    <property type="entry name" value="ATPASEGAMMA"/>
</dbReference>
<dbReference type="SUPFAM" id="SSF52943">
    <property type="entry name" value="ATP synthase (F1-ATPase), gamma subunit"/>
    <property type="match status" value="1"/>
</dbReference>
<dbReference type="PROSITE" id="PS00153">
    <property type="entry name" value="ATPASE_GAMMA"/>
    <property type="match status" value="1"/>
</dbReference>
<name>ATPG_XYLFA</name>
<organism>
    <name type="scientific">Xylella fastidiosa (strain 9a5c)</name>
    <dbReference type="NCBI Taxonomy" id="160492"/>
    <lineage>
        <taxon>Bacteria</taxon>
        <taxon>Pseudomonadati</taxon>
        <taxon>Pseudomonadota</taxon>
        <taxon>Gammaproteobacteria</taxon>
        <taxon>Lysobacterales</taxon>
        <taxon>Lysobacteraceae</taxon>
        <taxon>Xylella</taxon>
    </lineage>
</organism>